<dbReference type="EMBL" id="CP001072">
    <property type="protein sequence ID" value="ACD48760.1"/>
    <property type="molecule type" value="Genomic_DNA"/>
</dbReference>
<dbReference type="RefSeq" id="WP_000091385.1">
    <property type="nucleotide sequence ID" value="NC_010698.2"/>
</dbReference>
<dbReference type="SMR" id="B2UV78"/>
<dbReference type="GeneID" id="93237554"/>
<dbReference type="KEGG" id="hps:HPSH_06800"/>
<dbReference type="HOGENOM" id="CLU_144911_0_1_7"/>
<dbReference type="GO" id="GO:0005737">
    <property type="term" value="C:cytoplasm"/>
    <property type="evidence" value="ECO:0007669"/>
    <property type="project" value="UniProtKB-ARBA"/>
</dbReference>
<dbReference type="GO" id="GO:0015935">
    <property type="term" value="C:small ribosomal subunit"/>
    <property type="evidence" value="ECO:0007669"/>
    <property type="project" value="InterPro"/>
</dbReference>
<dbReference type="GO" id="GO:0019843">
    <property type="term" value="F:rRNA binding"/>
    <property type="evidence" value="ECO:0007669"/>
    <property type="project" value="UniProtKB-UniRule"/>
</dbReference>
<dbReference type="GO" id="GO:0003735">
    <property type="term" value="F:structural constituent of ribosome"/>
    <property type="evidence" value="ECO:0007669"/>
    <property type="project" value="InterPro"/>
</dbReference>
<dbReference type="GO" id="GO:0000028">
    <property type="term" value="P:ribosomal small subunit assembly"/>
    <property type="evidence" value="ECO:0007669"/>
    <property type="project" value="TreeGrafter"/>
</dbReference>
<dbReference type="GO" id="GO:0006412">
    <property type="term" value="P:translation"/>
    <property type="evidence" value="ECO:0007669"/>
    <property type="project" value="UniProtKB-UniRule"/>
</dbReference>
<dbReference type="FunFam" id="3.30.860.10:FF:000001">
    <property type="entry name" value="30S ribosomal protein S19"/>
    <property type="match status" value="1"/>
</dbReference>
<dbReference type="Gene3D" id="3.30.860.10">
    <property type="entry name" value="30s Ribosomal Protein S19, Chain A"/>
    <property type="match status" value="1"/>
</dbReference>
<dbReference type="HAMAP" id="MF_00531">
    <property type="entry name" value="Ribosomal_uS19"/>
    <property type="match status" value="1"/>
</dbReference>
<dbReference type="InterPro" id="IPR002222">
    <property type="entry name" value="Ribosomal_uS19"/>
</dbReference>
<dbReference type="InterPro" id="IPR005732">
    <property type="entry name" value="Ribosomal_uS19_bac-type"/>
</dbReference>
<dbReference type="InterPro" id="IPR020934">
    <property type="entry name" value="Ribosomal_uS19_CS"/>
</dbReference>
<dbReference type="InterPro" id="IPR023575">
    <property type="entry name" value="Ribosomal_uS19_SF"/>
</dbReference>
<dbReference type="NCBIfam" id="TIGR01050">
    <property type="entry name" value="rpsS_bact"/>
    <property type="match status" value="1"/>
</dbReference>
<dbReference type="PANTHER" id="PTHR11880">
    <property type="entry name" value="RIBOSOMAL PROTEIN S19P FAMILY MEMBER"/>
    <property type="match status" value="1"/>
</dbReference>
<dbReference type="PANTHER" id="PTHR11880:SF8">
    <property type="entry name" value="SMALL RIBOSOMAL SUBUNIT PROTEIN US19M"/>
    <property type="match status" value="1"/>
</dbReference>
<dbReference type="Pfam" id="PF00203">
    <property type="entry name" value="Ribosomal_S19"/>
    <property type="match status" value="1"/>
</dbReference>
<dbReference type="PIRSF" id="PIRSF002144">
    <property type="entry name" value="Ribosomal_S19"/>
    <property type="match status" value="1"/>
</dbReference>
<dbReference type="PRINTS" id="PR00975">
    <property type="entry name" value="RIBOSOMALS19"/>
</dbReference>
<dbReference type="SUPFAM" id="SSF54570">
    <property type="entry name" value="Ribosomal protein S19"/>
    <property type="match status" value="1"/>
</dbReference>
<dbReference type="PROSITE" id="PS00323">
    <property type="entry name" value="RIBOSOMAL_S19"/>
    <property type="match status" value="1"/>
</dbReference>
<proteinExistence type="inferred from homology"/>
<gene>
    <name evidence="1" type="primary">rpsS</name>
    <name type="ordered locus">HPSH_06800</name>
</gene>
<reference key="1">
    <citation type="submission" date="2008-05" db="EMBL/GenBank/DDBJ databases">
        <title>Genome sequence of Helicobacter pylori from the remote Amazon: traces of Asian ancestry of the first Americans.</title>
        <authorList>
            <person name="Kersulyte D."/>
            <person name="Kalia A."/>
            <person name="Gilman R.H."/>
            <person name="Berg D.E."/>
        </authorList>
    </citation>
    <scope>NUCLEOTIDE SEQUENCE [LARGE SCALE GENOMIC DNA]</scope>
    <source>
        <strain>Shi470</strain>
    </source>
</reference>
<keyword id="KW-0687">Ribonucleoprotein</keyword>
<keyword id="KW-0689">Ribosomal protein</keyword>
<keyword id="KW-0694">RNA-binding</keyword>
<keyword id="KW-0699">rRNA-binding</keyword>
<sequence length="93" mass="10674">MSRSIKKGPFIDDHLMKKTLKAKEGKDNRPIKTWSRRSTILPEMIGFTYNVHNGRVFVPVYITENHVGYKLGEFAPTRTFKGHKGSVQKKIGK</sequence>
<protein>
    <recommendedName>
        <fullName evidence="1">Small ribosomal subunit protein uS19</fullName>
    </recommendedName>
    <alternativeName>
        <fullName evidence="2">30S ribosomal protein S19</fullName>
    </alternativeName>
</protein>
<feature type="chain" id="PRO_1000127989" description="Small ribosomal subunit protein uS19">
    <location>
        <begin position="1"/>
        <end position="93"/>
    </location>
</feature>
<comment type="function">
    <text evidence="1">Protein S19 forms a complex with S13 that binds strongly to the 16S ribosomal RNA.</text>
</comment>
<comment type="similarity">
    <text evidence="1">Belongs to the universal ribosomal protein uS19 family.</text>
</comment>
<accession>B2UV78</accession>
<name>RS19_HELPS</name>
<organism>
    <name type="scientific">Helicobacter pylori (strain Shi470)</name>
    <dbReference type="NCBI Taxonomy" id="512562"/>
    <lineage>
        <taxon>Bacteria</taxon>
        <taxon>Pseudomonadati</taxon>
        <taxon>Campylobacterota</taxon>
        <taxon>Epsilonproteobacteria</taxon>
        <taxon>Campylobacterales</taxon>
        <taxon>Helicobacteraceae</taxon>
        <taxon>Helicobacter</taxon>
    </lineage>
</organism>
<evidence type="ECO:0000255" key="1">
    <source>
        <dbReference type="HAMAP-Rule" id="MF_00531"/>
    </source>
</evidence>
<evidence type="ECO:0000305" key="2"/>